<sequence length="118" mass="14090">MTIAEITIRQKFSYPFLFGNVLGHPWPRNVPRKEIKMLLFRTANNSFPGFLLIFTRKRRNLPKQRDNEIPRTRALETYLRVFSAARKQREADATASFWRLVTSASRSHYHMWPIKRII</sequence>
<reference key="1">
    <citation type="journal article" date="1997" name="Nature">
        <title>The nucleotide sequence of Saccharomyces cerevisiae chromosome XIII.</title>
        <authorList>
            <person name="Bowman S."/>
            <person name="Churcher C.M."/>
            <person name="Badcock K."/>
            <person name="Brown D."/>
            <person name="Chillingworth T."/>
            <person name="Connor R."/>
            <person name="Dedman K."/>
            <person name="Devlin K."/>
            <person name="Gentles S."/>
            <person name="Hamlin N."/>
            <person name="Hunt S."/>
            <person name="Jagels K."/>
            <person name="Lye G."/>
            <person name="Moule S."/>
            <person name="Odell C."/>
            <person name="Pearson D."/>
            <person name="Rajandream M.A."/>
            <person name="Rice P."/>
            <person name="Skelton J."/>
            <person name="Walsh S.V."/>
            <person name="Whitehead S."/>
            <person name="Barrell B.G."/>
        </authorList>
    </citation>
    <scope>NUCLEOTIDE SEQUENCE [LARGE SCALE GENOMIC DNA]</scope>
    <source>
        <strain>ATCC 204508 / S288c</strain>
    </source>
</reference>
<reference key="2">
    <citation type="journal article" date="2014" name="G3 (Bethesda)">
        <title>The reference genome sequence of Saccharomyces cerevisiae: Then and now.</title>
        <authorList>
            <person name="Engel S.R."/>
            <person name="Dietrich F.S."/>
            <person name="Fisk D.G."/>
            <person name="Binkley G."/>
            <person name="Balakrishnan R."/>
            <person name="Costanzo M.C."/>
            <person name="Dwight S.S."/>
            <person name="Hitz B.C."/>
            <person name="Karra K."/>
            <person name="Nash R.S."/>
            <person name="Weng S."/>
            <person name="Wong E.D."/>
            <person name="Lloyd P."/>
            <person name="Skrzypek M.S."/>
            <person name="Miyasato S.R."/>
            <person name="Simison M."/>
            <person name="Cherry J.M."/>
        </authorList>
    </citation>
    <scope>GENOME REANNOTATION</scope>
    <source>
        <strain>ATCC 204508 / S288c</strain>
    </source>
</reference>
<reference key="3">
    <citation type="journal article" date="2007" name="Genome Res.">
        <title>Approaching a complete repository of sequence-verified protein-encoding clones for Saccharomyces cerevisiae.</title>
        <authorList>
            <person name="Hu Y."/>
            <person name="Rolfs A."/>
            <person name="Bhullar B."/>
            <person name="Murthy T.V.S."/>
            <person name="Zhu C."/>
            <person name="Berger M.F."/>
            <person name="Camargo A.A."/>
            <person name="Kelley F."/>
            <person name="McCarron S."/>
            <person name="Jepson D."/>
            <person name="Richardson A."/>
            <person name="Raphael J."/>
            <person name="Moreira D."/>
            <person name="Taycher E."/>
            <person name="Zuo D."/>
            <person name="Mohr S."/>
            <person name="Kane M.F."/>
            <person name="Williamson J."/>
            <person name="Simpson A.J.G."/>
            <person name="Bulyk M.L."/>
            <person name="Harlow E."/>
            <person name="Marsischky G."/>
            <person name="Kolodner R.D."/>
            <person name="LaBaer J."/>
        </authorList>
    </citation>
    <scope>NUCLEOTIDE SEQUENCE [GENOMIC DNA]</scope>
    <source>
        <strain>ATCC 204508 / S288c</strain>
    </source>
</reference>
<organism>
    <name type="scientific">Saccharomyces cerevisiae (strain ATCC 204508 / S288c)</name>
    <name type="common">Baker's yeast</name>
    <dbReference type="NCBI Taxonomy" id="559292"/>
    <lineage>
        <taxon>Eukaryota</taxon>
        <taxon>Fungi</taxon>
        <taxon>Dikarya</taxon>
        <taxon>Ascomycota</taxon>
        <taxon>Saccharomycotina</taxon>
        <taxon>Saccharomycetes</taxon>
        <taxon>Saccharomycetales</taxon>
        <taxon>Saccharomycetaceae</taxon>
        <taxon>Saccharomyces</taxon>
    </lineage>
</organism>
<gene>
    <name type="ordered locus">YMR082C</name>
    <name type="ORF">YM9582.07C</name>
</gene>
<protein>
    <recommendedName>
        <fullName>Uncharacterized protein YMR082C</fullName>
    </recommendedName>
</protein>
<dbReference type="EMBL" id="Z49259">
    <property type="protein sequence ID" value="CAA89228.1"/>
    <property type="molecule type" value="Genomic_DNA"/>
</dbReference>
<dbReference type="EMBL" id="AY558364">
    <property type="protein sequence ID" value="AAS56690.1"/>
    <property type="molecule type" value="Genomic_DNA"/>
</dbReference>
<dbReference type="EMBL" id="BK006946">
    <property type="protein sequence ID" value="DAA80325.1"/>
    <property type="molecule type" value="Genomic_DNA"/>
</dbReference>
<dbReference type="PIR" id="S54457">
    <property type="entry name" value="S54457"/>
</dbReference>
<dbReference type="RefSeq" id="NP_001335805.1">
    <property type="nucleotide sequence ID" value="NM_001348865.1"/>
</dbReference>
<dbReference type="FunCoup" id="Q04276">
    <property type="interactions" value="25"/>
</dbReference>
<dbReference type="STRING" id="4932.YMR082C"/>
<dbReference type="PaxDb" id="4932-YMR082C"/>
<dbReference type="EnsemblFungi" id="YMR082C_mRNA">
    <property type="protein sequence ID" value="YMR082C"/>
    <property type="gene ID" value="YMR082C"/>
</dbReference>
<dbReference type="GeneID" id="855106"/>
<dbReference type="AGR" id="SGD:S000004687"/>
<dbReference type="SGD" id="S000004687">
    <property type="gene designation" value="YMR082C"/>
</dbReference>
<dbReference type="HOGENOM" id="CLU_2074989_0_0_1"/>
<dbReference type="InParanoid" id="Q04276"/>
<dbReference type="PRO" id="PR:Q04276"/>
<dbReference type="Proteomes" id="UP000002311">
    <property type="component" value="Chromosome XIII"/>
</dbReference>
<dbReference type="RNAct" id="Q04276">
    <property type="molecule type" value="protein"/>
</dbReference>
<name>YMX2_YEAST</name>
<accession>Q04276</accession>
<accession>A0A1S0T098</accession>
<proteinExistence type="predicted"/>
<feature type="chain" id="PRO_0000203283" description="Uncharacterized protein YMR082C">
    <location>
        <begin position="1"/>
        <end position="118"/>
    </location>
</feature>
<keyword id="KW-1185">Reference proteome</keyword>